<dbReference type="EMBL" id="CP000780">
    <property type="protein sequence ID" value="ABS56351.1"/>
    <property type="molecule type" value="Genomic_DNA"/>
</dbReference>
<dbReference type="RefSeq" id="WP_012107402.1">
    <property type="nucleotide sequence ID" value="NC_009712.1"/>
</dbReference>
<dbReference type="SMR" id="A7I9E0"/>
<dbReference type="STRING" id="456442.Mboo_1836"/>
<dbReference type="GeneID" id="5410648"/>
<dbReference type="KEGG" id="mbn:Mboo_1836"/>
<dbReference type="eggNOG" id="arCOG04229">
    <property type="taxonomic scope" value="Archaea"/>
</dbReference>
<dbReference type="HOGENOM" id="CLU_128576_0_0_2"/>
<dbReference type="OrthoDB" id="7000at2157"/>
<dbReference type="Proteomes" id="UP000002408">
    <property type="component" value="Chromosome"/>
</dbReference>
<dbReference type="GO" id="GO:0009347">
    <property type="term" value="C:aspartate carbamoyltransferase complex"/>
    <property type="evidence" value="ECO:0007669"/>
    <property type="project" value="InterPro"/>
</dbReference>
<dbReference type="GO" id="GO:0046872">
    <property type="term" value="F:metal ion binding"/>
    <property type="evidence" value="ECO:0007669"/>
    <property type="project" value="UniProtKB-KW"/>
</dbReference>
<dbReference type="GO" id="GO:0006207">
    <property type="term" value="P:'de novo' pyrimidine nucleobase biosynthetic process"/>
    <property type="evidence" value="ECO:0007669"/>
    <property type="project" value="InterPro"/>
</dbReference>
<dbReference type="GO" id="GO:0006221">
    <property type="term" value="P:pyrimidine nucleotide biosynthetic process"/>
    <property type="evidence" value="ECO:0007669"/>
    <property type="project" value="UniProtKB-UniRule"/>
</dbReference>
<dbReference type="Gene3D" id="2.30.30.20">
    <property type="entry name" value="Aspartate carbamoyltransferase regulatory subunit, C-terminal domain"/>
    <property type="match status" value="1"/>
</dbReference>
<dbReference type="Gene3D" id="3.30.70.140">
    <property type="entry name" value="Aspartate carbamoyltransferase regulatory subunit, N-terminal domain"/>
    <property type="match status" value="1"/>
</dbReference>
<dbReference type="HAMAP" id="MF_00002">
    <property type="entry name" value="Asp_carb_tr_reg"/>
    <property type="match status" value="1"/>
</dbReference>
<dbReference type="InterPro" id="IPR020545">
    <property type="entry name" value="Asp_carbamoyltransf_reg_N"/>
</dbReference>
<dbReference type="InterPro" id="IPR002801">
    <property type="entry name" value="Asp_carbamoylTrfase_reg"/>
</dbReference>
<dbReference type="InterPro" id="IPR020542">
    <property type="entry name" value="Asp_carbamoyltrfase_reg_C"/>
</dbReference>
<dbReference type="InterPro" id="IPR036792">
    <property type="entry name" value="Asp_carbatrfase_reg_C_sf"/>
</dbReference>
<dbReference type="InterPro" id="IPR036793">
    <property type="entry name" value="Asp_carbatrfase_reg_N_sf"/>
</dbReference>
<dbReference type="NCBIfam" id="TIGR00240">
    <property type="entry name" value="ATCase_reg"/>
    <property type="match status" value="1"/>
</dbReference>
<dbReference type="PANTHER" id="PTHR35805">
    <property type="entry name" value="ASPARTATE CARBAMOYLTRANSFERASE REGULATORY CHAIN"/>
    <property type="match status" value="1"/>
</dbReference>
<dbReference type="PANTHER" id="PTHR35805:SF1">
    <property type="entry name" value="ASPARTATE CARBAMOYLTRANSFERASE REGULATORY CHAIN"/>
    <property type="match status" value="1"/>
</dbReference>
<dbReference type="Pfam" id="PF01948">
    <property type="entry name" value="PyrI"/>
    <property type="match status" value="1"/>
</dbReference>
<dbReference type="Pfam" id="PF02748">
    <property type="entry name" value="PyrI_C"/>
    <property type="match status" value="1"/>
</dbReference>
<dbReference type="SUPFAM" id="SSF57825">
    <property type="entry name" value="Aspartate carbamoyltransferase, Regulatory-chain, C-terminal domain"/>
    <property type="match status" value="1"/>
</dbReference>
<dbReference type="SUPFAM" id="SSF54893">
    <property type="entry name" value="Aspartate carbamoyltransferase, Regulatory-chain, N-terminal domain"/>
    <property type="match status" value="1"/>
</dbReference>
<evidence type="ECO:0000255" key="1">
    <source>
        <dbReference type="HAMAP-Rule" id="MF_00002"/>
    </source>
</evidence>
<name>PYRI_METB6</name>
<reference key="1">
    <citation type="journal article" date="2015" name="Microbiology">
        <title>Genome of Methanoregula boonei 6A8 reveals adaptations to oligotrophic peatland environments.</title>
        <authorList>
            <person name="Braeuer S."/>
            <person name="Cadillo-Quiroz H."/>
            <person name="Kyrpides N."/>
            <person name="Woyke T."/>
            <person name="Goodwin L."/>
            <person name="Detter C."/>
            <person name="Podell S."/>
            <person name="Yavitt J.B."/>
            <person name="Zinder S.H."/>
        </authorList>
    </citation>
    <scope>NUCLEOTIDE SEQUENCE [LARGE SCALE GENOMIC DNA]</scope>
    <source>
        <strain>DSM 21154 / JCM 14090 / 6A8</strain>
    </source>
</reference>
<proteinExistence type="inferred from homology"/>
<keyword id="KW-0479">Metal-binding</keyword>
<keyword id="KW-0665">Pyrimidine biosynthesis</keyword>
<keyword id="KW-1185">Reference proteome</keyword>
<keyword id="KW-0862">Zinc</keyword>
<protein>
    <recommendedName>
        <fullName evidence="1">Aspartate carbamoyltransferase regulatory chain</fullName>
    </recommendedName>
</protein>
<gene>
    <name evidence="1" type="primary">pyrI</name>
    <name type="ordered locus">Mboo_1836</name>
</gene>
<organism>
    <name type="scientific">Methanoregula boonei (strain DSM 21154 / JCM 14090 / 6A8)</name>
    <dbReference type="NCBI Taxonomy" id="456442"/>
    <lineage>
        <taxon>Archaea</taxon>
        <taxon>Methanobacteriati</taxon>
        <taxon>Methanobacteriota</taxon>
        <taxon>Stenosarchaea group</taxon>
        <taxon>Methanomicrobia</taxon>
        <taxon>Methanomicrobiales</taxon>
        <taxon>Methanoregulaceae</taxon>
        <taxon>Methanoregula</taxon>
    </lineage>
</organism>
<feature type="chain" id="PRO_0000321505" description="Aspartate carbamoyltransferase regulatory chain">
    <location>
        <begin position="1"/>
        <end position="165"/>
    </location>
</feature>
<feature type="binding site" evidence="1">
    <location>
        <position position="121"/>
    </location>
    <ligand>
        <name>Zn(2+)</name>
        <dbReference type="ChEBI" id="CHEBI:29105"/>
    </ligand>
</feature>
<feature type="binding site" evidence="1">
    <location>
        <position position="126"/>
    </location>
    <ligand>
        <name>Zn(2+)</name>
        <dbReference type="ChEBI" id="CHEBI:29105"/>
    </ligand>
</feature>
<feature type="binding site" evidence="1">
    <location>
        <position position="149"/>
    </location>
    <ligand>
        <name>Zn(2+)</name>
        <dbReference type="ChEBI" id="CHEBI:29105"/>
    </ligand>
</feature>
<feature type="binding site" evidence="1">
    <location>
        <position position="152"/>
    </location>
    <ligand>
        <name>Zn(2+)</name>
        <dbReference type="ChEBI" id="CHEBI:29105"/>
    </ligand>
</feature>
<sequence length="165" mass="17947">MRHIAAADTGDDEGEGLLVRRIKNGTVIDHIDGGEALNVIRILGISGTTNEALSIATNVPSKHMGSTKDIVKISNRELSKEEVDRIALISPNATINIIRHFKVCEKQGVEIPTVIEGSVRCPNPGCITRTNEPIRTRFAVLPDGKGLRCLYCDSVITKDLTSYII</sequence>
<comment type="function">
    <text evidence="1">Involved in allosteric regulation of aspartate carbamoyltransferase.</text>
</comment>
<comment type="cofactor">
    <cofactor evidence="1">
        <name>Zn(2+)</name>
        <dbReference type="ChEBI" id="CHEBI:29105"/>
    </cofactor>
    <text evidence="1">Binds 1 zinc ion per subunit.</text>
</comment>
<comment type="subunit">
    <text evidence="1">Contains catalytic and regulatory chains.</text>
</comment>
<comment type="similarity">
    <text evidence="1">Belongs to the PyrI family.</text>
</comment>
<accession>A7I9E0</accession>